<proteinExistence type="evidence at transcript level"/>
<organism>
    <name type="scientific">Bos taurus</name>
    <name type="common">Bovine</name>
    <dbReference type="NCBI Taxonomy" id="9913"/>
    <lineage>
        <taxon>Eukaryota</taxon>
        <taxon>Metazoa</taxon>
        <taxon>Chordata</taxon>
        <taxon>Craniata</taxon>
        <taxon>Vertebrata</taxon>
        <taxon>Euteleostomi</taxon>
        <taxon>Mammalia</taxon>
        <taxon>Eutheria</taxon>
        <taxon>Laurasiatheria</taxon>
        <taxon>Artiodactyla</taxon>
        <taxon>Ruminantia</taxon>
        <taxon>Pecora</taxon>
        <taxon>Bovidae</taxon>
        <taxon>Bovinae</taxon>
        <taxon>Bos</taxon>
    </lineage>
</organism>
<name>SOCS4_BOVIN</name>
<evidence type="ECO:0000250" key="1"/>
<evidence type="ECO:0000255" key="2">
    <source>
        <dbReference type="PROSITE-ProRule" id="PRU00191"/>
    </source>
</evidence>
<evidence type="ECO:0000255" key="3">
    <source>
        <dbReference type="PROSITE-ProRule" id="PRU00194"/>
    </source>
</evidence>
<evidence type="ECO:0000256" key="4">
    <source>
        <dbReference type="SAM" id="MobiDB-lite"/>
    </source>
</evidence>
<sequence>MAENSESNSKNVDVRPKTSRSRSADRKDGYVWSGKKLSWSKKSESCSDAETVSAIEKTEVPLRSQERKHSCSSIELDLDHSCGHRFLGRSLKQKLQDAVGQCFPIKNCSSRHSSGLPSKRKIHISELMLDKCPFPPRSDLAFRWHFIKRHTAPISPKSDEWVSTDLSQSELRDGQLKQRRNMEEVSCFSHTSVQPCVITSNNSSGRGGPGTDSIVNLASNNSIEDSDMDSDDEIITLCTSSRKRNKPKWEIDEEILQLETPPKYHTQIDYVHCLVPDLLQINNNPCYWGVMDKYAAEALLEGKPEGTFLLRDSAQEDYLFSVSFRRYSRSLHARIEQWNHNFSFDAHDPCVFHSPDITGLLEHYKDPSACMFFEPLLSTPLIRTFPFSLQHICRTVICNCTTYDGIDALPIPSSMKLYLKEYHYKSKVRVLRIDAPEQQC</sequence>
<accession>Q0VC91</accession>
<keyword id="KW-0341">Growth regulation</keyword>
<keyword id="KW-1185">Reference proteome</keyword>
<keyword id="KW-0727">SH2 domain</keyword>
<keyword id="KW-0734">Signal transduction inhibitor</keyword>
<keyword id="KW-0833">Ubl conjugation pathway</keyword>
<comment type="function">
    <text evidence="1">SOCS family proteins form part of a classical negative feedback system that regulates cytokine signal transduction. Substrate-recognition component of a SCF-like ECS (Elongin BC-CUL2/5-SOCS-box protein) E3 ubiquitin-protein ligase complex which mediates the ubiquitination and subsequent proteasomal degradation of target proteins. Inhibits EGF signaling by mediating the degradation of the Tyr-phosphorylated EGF receptor/EGFR (By similarity).</text>
</comment>
<comment type="pathway">
    <text>Protein modification; protein ubiquitination.</text>
</comment>
<comment type="domain">
    <text evidence="1">The SOCS box domain mediates the interaction with the Elongin BC complex, an adapter module in different E3 ubiquitin ligase complexes.</text>
</comment>
<dbReference type="EMBL" id="BC120292">
    <property type="protein sequence ID" value="AAI20293.1"/>
    <property type="molecule type" value="mRNA"/>
</dbReference>
<dbReference type="RefSeq" id="NP_001069686.1">
    <property type="nucleotide sequence ID" value="NM_001076218.2"/>
</dbReference>
<dbReference type="SMR" id="Q0VC91"/>
<dbReference type="FunCoup" id="Q0VC91">
    <property type="interactions" value="2437"/>
</dbReference>
<dbReference type="STRING" id="9913.ENSBTAP00000029320"/>
<dbReference type="PaxDb" id="9913-ENSBTAP00000029320"/>
<dbReference type="Ensembl" id="ENSBTAT00000116471.1">
    <property type="protein sequence ID" value="ENSBTAP00000101551.1"/>
    <property type="gene ID" value="ENSBTAG00000058350.1"/>
</dbReference>
<dbReference type="Ensembl" id="ENSBTAT00000124063.1">
    <property type="protein sequence ID" value="ENSBTAP00000096992.1"/>
    <property type="gene ID" value="ENSBTAG00000058350.1"/>
</dbReference>
<dbReference type="GeneID" id="540412"/>
<dbReference type="KEGG" id="bta:540412"/>
<dbReference type="CTD" id="122809"/>
<dbReference type="VEuPathDB" id="HostDB:ENSBTAG00000021988"/>
<dbReference type="eggNOG" id="KOG4566">
    <property type="taxonomic scope" value="Eukaryota"/>
</dbReference>
<dbReference type="GeneTree" id="ENSGT00940000161456"/>
<dbReference type="HOGENOM" id="CLU_035609_0_0_1"/>
<dbReference type="InParanoid" id="Q0VC91"/>
<dbReference type="OMA" id="RINNNPC"/>
<dbReference type="OrthoDB" id="8820570at2759"/>
<dbReference type="TreeFam" id="TF321368"/>
<dbReference type="UniPathway" id="UPA00143"/>
<dbReference type="Proteomes" id="UP000009136">
    <property type="component" value="Chromosome 10"/>
</dbReference>
<dbReference type="Bgee" id="ENSBTAG00000021988">
    <property type="expression patterns" value="Expressed in oocyte and 107 other cell types or tissues"/>
</dbReference>
<dbReference type="GO" id="GO:0019221">
    <property type="term" value="P:cytokine-mediated signaling pathway"/>
    <property type="evidence" value="ECO:0000318"/>
    <property type="project" value="GO_Central"/>
</dbReference>
<dbReference type="GO" id="GO:0035556">
    <property type="term" value="P:intracellular signal transduction"/>
    <property type="evidence" value="ECO:0007669"/>
    <property type="project" value="InterPro"/>
</dbReference>
<dbReference type="GO" id="GO:0007175">
    <property type="term" value="P:negative regulation of epidermal growth factor-activated receptor activity"/>
    <property type="evidence" value="ECO:0000250"/>
    <property type="project" value="UniProtKB"/>
</dbReference>
<dbReference type="GO" id="GO:0032436">
    <property type="term" value="P:positive regulation of proteasomal ubiquitin-dependent protein catabolic process"/>
    <property type="evidence" value="ECO:0000250"/>
    <property type="project" value="UniProtKB"/>
</dbReference>
<dbReference type="GO" id="GO:0016567">
    <property type="term" value="P:protein ubiquitination"/>
    <property type="evidence" value="ECO:0007669"/>
    <property type="project" value="UniProtKB-UniPathway"/>
</dbReference>
<dbReference type="CDD" id="cd10385">
    <property type="entry name" value="SH2_SOCS4"/>
    <property type="match status" value="1"/>
</dbReference>
<dbReference type="CDD" id="cd03738">
    <property type="entry name" value="SOCS_SOCS4"/>
    <property type="match status" value="1"/>
</dbReference>
<dbReference type="FunFam" id="3.30.505.10:FF:000028">
    <property type="entry name" value="Suppressor of cytokine signaling 5"/>
    <property type="match status" value="1"/>
</dbReference>
<dbReference type="Gene3D" id="3.30.505.10">
    <property type="entry name" value="SH2 domain"/>
    <property type="match status" value="1"/>
</dbReference>
<dbReference type="InterPro" id="IPR000980">
    <property type="entry name" value="SH2"/>
</dbReference>
<dbReference type="InterPro" id="IPR036860">
    <property type="entry name" value="SH2_dom_sf"/>
</dbReference>
<dbReference type="InterPro" id="IPR022252">
    <property type="entry name" value="SOCS4/SOCS5_dom"/>
</dbReference>
<dbReference type="InterPro" id="IPR035864">
    <property type="entry name" value="SOCS4_SH2"/>
</dbReference>
<dbReference type="InterPro" id="IPR037342">
    <property type="entry name" value="SOCS4_SOCS"/>
</dbReference>
<dbReference type="InterPro" id="IPR001496">
    <property type="entry name" value="SOCS_box"/>
</dbReference>
<dbReference type="InterPro" id="IPR036036">
    <property type="entry name" value="SOCS_box-like_dom_sf"/>
</dbReference>
<dbReference type="PANTHER" id="PTHR10155">
    <property type="entry name" value="PHOSPHATIDYLINOSITOL 3-KINASE REGULATORY SUBUNIT"/>
    <property type="match status" value="1"/>
</dbReference>
<dbReference type="PANTHER" id="PTHR10155:SF21">
    <property type="entry name" value="SUPPRESSOR OF CYTOKINE SIGNALING 4"/>
    <property type="match status" value="1"/>
</dbReference>
<dbReference type="Pfam" id="PF00017">
    <property type="entry name" value="SH2"/>
    <property type="match status" value="1"/>
</dbReference>
<dbReference type="Pfam" id="PF12610">
    <property type="entry name" value="SOCS"/>
    <property type="match status" value="1"/>
</dbReference>
<dbReference type="Pfam" id="PF07525">
    <property type="entry name" value="SOCS_box"/>
    <property type="match status" value="1"/>
</dbReference>
<dbReference type="SMART" id="SM00252">
    <property type="entry name" value="SH2"/>
    <property type="match status" value="1"/>
</dbReference>
<dbReference type="SMART" id="SM00253">
    <property type="entry name" value="SOCS"/>
    <property type="match status" value="1"/>
</dbReference>
<dbReference type="SMART" id="SM00969">
    <property type="entry name" value="SOCS_box"/>
    <property type="match status" value="1"/>
</dbReference>
<dbReference type="SUPFAM" id="SSF55550">
    <property type="entry name" value="SH2 domain"/>
    <property type="match status" value="1"/>
</dbReference>
<dbReference type="SUPFAM" id="SSF158235">
    <property type="entry name" value="SOCS box-like"/>
    <property type="match status" value="1"/>
</dbReference>
<dbReference type="PROSITE" id="PS50001">
    <property type="entry name" value="SH2"/>
    <property type="match status" value="1"/>
</dbReference>
<dbReference type="PROSITE" id="PS50225">
    <property type="entry name" value="SOCS"/>
    <property type="match status" value="1"/>
</dbReference>
<feature type="chain" id="PRO_0000263067" description="Suppressor of cytokine signaling 4">
    <location>
        <begin position="1"/>
        <end position="440"/>
    </location>
</feature>
<feature type="domain" description="SH2" evidence="2">
    <location>
        <begin position="286"/>
        <end position="381"/>
    </location>
</feature>
<feature type="domain" description="SOCS box" evidence="3">
    <location>
        <begin position="376"/>
        <end position="425"/>
    </location>
</feature>
<feature type="region of interest" description="Disordered" evidence="4">
    <location>
        <begin position="1"/>
        <end position="29"/>
    </location>
</feature>
<feature type="compositionally biased region" description="Polar residues" evidence="4">
    <location>
        <begin position="1"/>
        <end position="11"/>
    </location>
</feature>
<feature type="compositionally biased region" description="Basic and acidic residues" evidence="4">
    <location>
        <begin position="12"/>
        <end position="29"/>
    </location>
</feature>
<protein>
    <recommendedName>
        <fullName>Suppressor of cytokine signaling 4</fullName>
        <shortName>SOCS-4</shortName>
    </recommendedName>
</protein>
<gene>
    <name type="primary">SOCS4</name>
</gene>
<reference key="1">
    <citation type="submission" date="2006-08" db="EMBL/GenBank/DDBJ databases">
        <authorList>
            <consortium name="NIH - Mammalian Gene Collection (MGC) project"/>
        </authorList>
    </citation>
    <scope>NUCLEOTIDE SEQUENCE [LARGE SCALE MRNA]</scope>
    <source>
        <strain>Hereford</strain>
        <tissue>Fetal spinal cord</tissue>
    </source>
</reference>